<protein>
    <recommendedName>
        <fullName>T-box transcription factor TBX3</fullName>
        <shortName>T-box protein 3</shortName>
    </recommendedName>
</protein>
<gene>
    <name type="primary">Tbx3</name>
</gene>
<sequence length="741" mass="79160">MSLSMRDPVIPGTSMAYHPFLPHRAPDFAMSAVLGHQPPFFPALTLPPNGAAALSLPGALAKPIMDQLVGAAETGIPFSSLGPQAHLRPLKTMEPEEDVEDDPKVHLEAKELWDQFHKRGTEMVITKSGRRMFPPFKVRCSGLDKKAKYILLMDIIAADDCRYKFHNSRWMVAGKADPEMPKRMYIHPDSPATGEQWMSKVVTFHKLKLTNNISDKHGFTLAFPSDHATWQGNYSFGTQTILNSMHKYQPRFHIVRANDILKLPYSTFRTYLFPETEFIAVTAYQNDKITQLKIDNNPFAKGFRDTGNGRREKRKQLTLQSMRVFEERHKKETSDESSSEQAAFNCFAQASSPAVSIVGTSNLKDLCPSEAESDAEAESKEEHGPEACDAAKISTTTAEEPGRDKGSPATRAQLFPAEPSRARDTARLDKASPDSRHSPATISSSTRVPGADERRSPGREGPVATKVDEARAIPAKDAFAPLSVQTDATAHLAQGPLPGLGFAPGLAGQQFFNGHPLFLHPGQFAMGGAFSSMAAGMGPLLATVSGASTGVSGLESTAMASAAAAQGLSGASAATLPFHLQQHVLASQGLAMSPFGSLFPYPYTYMAAAAAASTAAASSSVHRHPFLNLNSMRPRLRYSPYSIPVPVPDSSSLLATALPSMASAAGPLDGKAAALAASPASVAVDSGSELNSRSSTLSSGSVSLSPKLCSEKEAATSELQSIQRLVSGLEAKPDRSCSGSP</sequence>
<comment type="function">
    <text evidence="2 5 6 7">Transcriptional repressor involved in developmental processes (By similarity). Binds to the palindromic T site 5'-TTCACACCTAGGTGTGAA-3' DNA sequence, or a half-site, which are present in the regulatory region of several genes (By similarity). Probably plays a role in limb pattern formation (By similarity). Required for mammary placode induction, and maintenance of the mammary buds during development (PubMed:16222716). Involved in branching morphogenesis in both developing lungs and adult mammary glands, via negative modulation of target genes; acting redundantly with TBX2 (PubMed:16222716, PubMed:27720610). Required, together with TBX2, to maintain cell proliferation in the embryonic lung mesenchyme; perhaps acting downstream of SHH, BMP and TGFbeta signaling (PubMed:27720610). Involved in modulating early inner ear development, acting independently of, and also redundantly with, TBX2 in different subregions of the developing ear (PubMed:33795231). Acts as a negative regulator of PML function in cellular senescence (By similarity).</text>
</comment>
<comment type="subunit">
    <text evidence="1">Interacts with PML.</text>
</comment>
<comment type="subcellular location">
    <subcellularLocation>
        <location evidence="3">Nucleus</location>
    </subcellularLocation>
</comment>
<comment type="alternative products">
    <event type="alternative splicing"/>
    <isoform>
        <id>P70324-1</id>
        <name>1</name>
        <sequence type="displayed"/>
    </isoform>
    <isoform>
        <id>P70324-2</id>
        <name>2</name>
        <sequence type="described" ref="VSP_013377"/>
    </isoform>
</comment>
<comment type="tissue specificity">
    <text>In adults, highest levels in lung. Also found in brain, heart, kidney, liver and ovary.</text>
</comment>
<comment type="developmental stage">
    <text evidence="5 7 8">At 9.5 dpc, expressed in the otic vesicle, also known as the otocyst (at protein level) (PubMed:33795231). Between 10.5-12.0 dpc, expressed in various regions of the developing ear, including the developing vestibular system and the epithelium of the cochlear duct (at protein level) (PubMed:33795231). Expressed in the blastocyst at 3.5 dpc (PubMed:8853987). At 7.5 dpc, expressed in the extraembryonic endoderm and in the mesoderm of the chorion and amnion (PubMed:8853987). At 9.5 dpc, in the facial region, forelimb, pharyngeal epithelium, mesenchyme of the pharyngeal arches and the lateral body wall and, at 12.5 dpc, in the trigeminal ganglia, developing central nervous system and in the mammary buds (PubMed:8853987). Expressed in a continuous stripe of mesenchyme in the ventro-lateral body wall between the fore and hind limb buds at day 10.5-11.5 dpc (PubMed:16222716). Also expressed in the epithelium of the first and third mammary placodes at 10.5 dpc, and in all five pairs of mammary placodes between 11.5 and 13.5 dpc (PubMed:16222716).</text>
</comment>
<comment type="disruption phenotype">
    <text evidence="6 7">Conditional knockdown targeted mainly to lung mesenchyme causes lung hypoplasia at 18.5 dpc (PubMed:27720610). Conditional knockdown targeted mainly to the otic epithelium disrupts inner ear morphogenesis, which is exacerbated by simultaneous conditional knockdown of TBX2 (PubMed:33795231). Simultaneous conditional knockdown of TBX2 and TBX3 targeted mainly to lung mesenchyme causes severe bleeding from 10.5 dpc and embryos die shortly thereafter, perhaps as a result of knockdown in the developing heart (PubMed:27720610).</text>
</comment>
<keyword id="KW-0025">Alternative splicing</keyword>
<keyword id="KW-0217">Developmental protein</keyword>
<keyword id="KW-0238">DNA-binding</keyword>
<keyword id="KW-0539">Nucleus</keyword>
<keyword id="KW-0597">Phosphoprotein</keyword>
<keyword id="KW-1185">Reference proteome</keyword>
<keyword id="KW-0678">Repressor</keyword>
<keyword id="KW-0804">Transcription</keyword>
<keyword id="KW-0805">Transcription regulation</keyword>
<organism>
    <name type="scientific">Mus musculus</name>
    <name type="common">Mouse</name>
    <dbReference type="NCBI Taxonomy" id="10090"/>
    <lineage>
        <taxon>Eukaryota</taxon>
        <taxon>Metazoa</taxon>
        <taxon>Chordata</taxon>
        <taxon>Craniata</taxon>
        <taxon>Vertebrata</taxon>
        <taxon>Euteleostomi</taxon>
        <taxon>Mammalia</taxon>
        <taxon>Eutheria</taxon>
        <taxon>Euarchontoglires</taxon>
        <taxon>Glires</taxon>
        <taxon>Rodentia</taxon>
        <taxon>Myomorpha</taxon>
        <taxon>Muroidea</taxon>
        <taxon>Muridae</taxon>
        <taxon>Murinae</taxon>
        <taxon>Mus</taxon>
        <taxon>Mus</taxon>
    </lineage>
</organism>
<evidence type="ECO:0000250" key="1"/>
<evidence type="ECO:0000250" key="2">
    <source>
        <dbReference type="UniProtKB" id="O15119"/>
    </source>
</evidence>
<evidence type="ECO:0000255" key="3">
    <source>
        <dbReference type="PROSITE-ProRule" id="PRU00201"/>
    </source>
</evidence>
<evidence type="ECO:0000256" key="4">
    <source>
        <dbReference type="SAM" id="MobiDB-lite"/>
    </source>
</evidence>
<evidence type="ECO:0000269" key="5">
    <source>
    </source>
</evidence>
<evidence type="ECO:0000269" key="6">
    <source>
    </source>
</evidence>
<evidence type="ECO:0000269" key="7">
    <source>
    </source>
</evidence>
<evidence type="ECO:0000269" key="8">
    <source>
    </source>
</evidence>
<evidence type="ECO:0000303" key="9">
    <source>
    </source>
</evidence>
<evidence type="ECO:0000303" key="10">
    <source>
    </source>
</evidence>
<evidence type="ECO:0000305" key="11"/>
<evidence type="ECO:0007744" key="12">
    <source>
    </source>
</evidence>
<evidence type="ECO:0007744" key="13">
    <source>
    </source>
</evidence>
<reference key="1">
    <citation type="journal article" date="2005" name="Science">
        <title>The transcriptional landscape of the mammalian genome.</title>
        <authorList>
            <person name="Carninci P."/>
            <person name="Kasukawa T."/>
            <person name="Katayama S."/>
            <person name="Gough J."/>
            <person name="Frith M.C."/>
            <person name="Maeda N."/>
            <person name="Oyama R."/>
            <person name="Ravasi T."/>
            <person name="Lenhard B."/>
            <person name="Wells C."/>
            <person name="Kodzius R."/>
            <person name="Shimokawa K."/>
            <person name="Bajic V.B."/>
            <person name="Brenner S.E."/>
            <person name="Batalov S."/>
            <person name="Forrest A.R."/>
            <person name="Zavolan M."/>
            <person name="Davis M.J."/>
            <person name="Wilming L.G."/>
            <person name="Aidinis V."/>
            <person name="Allen J.E."/>
            <person name="Ambesi-Impiombato A."/>
            <person name="Apweiler R."/>
            <person name="Aturaliya R.N."/>
            <person name="Bailey T.L."/>
            <person name="Bansal M."/>
            <person name="Baxter L."/>
            <person name="Beisel K.W."/>
            <person name="Bersano T."/>
            <person name="Bono H."/>
            <person name="Chalk A.M."/>
            <person name="Chiu K.P."/>
            <person name="Choudhary V."/>
            <person name="Christoffels A."/>
            <person name="Clutterbuck D.R."/>
            <person name="Crowe M.L."/>
            <person name="Dalla E."/>
            <person name="Dalrymple B.P."/>
            <person name="de Bono B."/>
            <person name="Della Gatta G."/>
            <person name="di Bernardo D."/>
            <person name="Down T."/>
            <person name="Engstrom P."/>
            <person name="Fagiolini M."/>
            <person name="Faulkner G."/>
            <person name="Fletcher C.F."/>
            <person name="Fukushima T."/>
            <person name="Furuno M."/>
            <person name="Futaki S."/>
            <person name="Gariboldi M."/>
            <person name="Georgii-Hemming P."/>
            <person name="Gingeras T.R."/>
            <person name="Gojobori T."/>
            <person name="Green R.E."/>
            <person name="Gustincich S."/>
            <person name="Harbers M."/>
            <person name="Hayashi Y."/>
            <person name="Hensch T.K."/>
            <person name="Hirokawa N."/>
            <person name="Hill D."/>
            <person name="Huminiecki L."/>
            <person name="Iacono M."/>
            <person name="Ikeo K."/>
            <person name="Iwama A."/>
            <person name="Ishikawa T."/>
            <person name="Jakt M."/>
            <person name="Kanapin A."/>
            <person name="Katoh M."/>
            <person name="Kawasawa Y."/>
            <person name="Kelso J."/>
            <person name="Kitamura H."/>
            <person name="Kitano H."/>
            <person name="Kollias G."/>
            <person name="Krishnan S.P."/>
            <person name="Kruger A."/>
            <person name="Kummerfeld S.K."/>
            <person name="Kurochkin I.V."/>
            <person name="Lareau L.F."/>
            <person name="Lazarevic D."/>
            <person name="Lipovich L."/>
            <person name="Liu J."/>
            <person name="Liuni S."/>
            <person name="McWilliam S."/>
            <person name="Madan Babu M."/>
            <person name="Madera M."/>
            <person name="Marchionni L."/>
            <person name="Matsuda H."/>
            <person name="Matsuzawa S."/>
            <person name="Miki H."/>
            <person name="Mignone F."/>
            <person name="Miyake S."/>
            <person name="Morris K."/>
            <person name="Mottagui-Tabar S."/>
            <person name="Mulder N."/>
            <person name="Nakano N."/>
            <person name="Nakauchi H."/>
            <person name="Ng P."/>
            <person name="Nilsson R."/>
            <person name="Nishiguchi S."/>
            <person name="Nishikawa S."/>
            <person name="Nori F."/>
            <person name="Ohara O."/>
            <person name="Okazaki Y."/>
            <person name="Orlando V."/>
            <person name="Pang K.C."/>
            <person name="Pavan W.J."/>
            <person name="Pavesi G."/>
            <person name="Pesole G."/>
            <person name="Petrovsky N."/>
            <person name="Piazza S."/>
            <person name="Reed J."/>
            <person name="Reid J.F."/>
            <person name="Ring B.Z."/>
            <person name="Ringwald M."/>
            <person name="Rost B."/>
            <person name="Ruan Y."/>
            <person name="Salzberg S.L."/>
            <person name="Sandelin A."/>
            <person name="Schneider C."/>
            <person name="Schoenbach C."/>
            <person name="Sekiguchi K."/>
            <person name="Semple C.A."/>
            <person name="Seno S."/>
            <person name="Sessa L."/>
            <person name="Sheng Y."/>
            <person name="Shibata Y."/>
            <person name="Shimada H."/>
            <person name="Shimada K."/>
            <person name="Silva D."/>
            <person name="Sinclair B."/>
            <person name="Sperling S."/>
            <person name="Stupka E."/>
            <person name="Sugiura K."/>
            <person name="Sultana R."/>
            <person name="Takenaka Y."/>
            <person name="Taki K."/>
            <person name="Tammoja K."/>
            <person name="Tan S.L."/>
            <person name="Tang S."/>
            <person name="Taylor M.S."/>
            <person name="Tegner J."/>
            <person name="Teichmann S.A."/>
            <person name="Ueda H.R."/>
            <person name="van Nimwegen E."/>
            <person name="Verardo R."/>
            <person name="Wei C.L."/>
            <person name="Yagi K."/>
            <person name="Yamanishi H."/>
            <person name="Zabarovsky E."/>
            <person name="Zhu S."/>
            <person name="Zimmer A."/>
            <person name="Hide W."/>
            <person name="Bult C."/>
            <person name="Grimmond S.M."/>
            <person name="Teasdale R.D."/>
            <person name="Liu E.T."/>
            <person name="Brusic V."/>
            <person name="Quackenbush J."/>
            <person name="Wahlestedt C."/>
            <person name="Mattick J.S."/>
            <person name="Hume D.A."/>
            <person name="Kai C."/>
            <person name="Sasaki D."/>
            <person name="Tomaru Y."/>
            <person name="Fukuda S."/>
            <person name="Kanamori-Katayama M."/>
            <person name="Suzuki M."/>
            <person name="Aoki J."/>
            <person name="Arakawa T."/>
            <person name="Iida J."/>
            <person name="Imamura K."/>
            <person name="Itoh M."/>
            <person name="Kato T."/>
            <person name="Kawaji H."/>
            <person name="Kawagashira N."/>
            <person name="Kawashima T."/>
            <person name="Kojima M."/>
            <person name="Kondo S."/>
            <person name="Konno H."/>
            <person name="Nakano K."/>
            <person name="Ninomiya N."/>
            <person name="Nishio T."/>
            <person name="Okada M."/>
            <person name="Plessy C."/>
            <person name="Shibata K."/>
            <person name="Shiraki T."/>
            <person name="Suzuki S."/>
            <person name="Tagami M."/>
            <person name="Waki K."/>
            <person name="Watahiki A."/>
            <person name="Okamura-Oho Y."/>
            <person name="Suzuki H."/>
            <person name="Kawai J."/>
            <person name="Hayashizaki Y."/>
        </authorList>
    </citation>
    <scope>NUCLEOTIDE SEQUENCE [LARGE SCALE MRNA] (ISOFORM 1)</scope>
    <source>
        <strain>C57BL/6J</strain>
        <tissue>Lung</tissue>
    </source>
</reference>
<reference key="2">
    <citation type="journal article" date="2009" name="PLoS Biol.">
        <title>Lineage-specific biology revealed by a finished genome assembly of the mouse.</title>
        <authorList>
            <person name="Church D.M."/>
            <person name="Goodstadt L."/>
            <person name="Hillier L.W."/>
            <person name="Zody M.C."/>
            <person name="Goldstein S."/>
            <person name="She X."/>
            <person name="Bult C.J."/>
            <person name="Agarwala R."/>
            <person name="Cherry J.L."/>
            <person name="DiCuccio M."/>
            <person name="Hlavina W."/>
            <person name="Kapustin Y."/>
            <person name="Meric P."/>
            <person name="Maglott D."/>
            <person name="Birtle Z."/>
            <person name="Marques A.C."/>
            <person name="Graves T."/>
            <person name="Zhou S."/>
            <person name="Teague B."/>
            <person name="Potamousis K."/>
            <person name="Churas C."/>
            <person name="Place M."/>
            <person name="Herschleb J."/>
            <person name="Runnheim R."/>
            <person name="Forrest D."/>
            <person name="Amos-Landgraf J."/>
            <person name="Schwartz D.C."/>
            <person name="Cheng Z."/>
            <person name="Lindblad-Toh K."/>
            <person name="Eichler E.E."/>
            <person name="Ponting C.P."/>
        </authorList>
    </citation>
    <scope>NUCLEOTIDE SEQUENCE [LARGE SCALE GENOMIC DNA]</scope>
    <source>
        <strain>C57BL/6J</strain>
    </source>
</reference>
<reference key="3">
    <citation type="journal article" date="1996" name="Genetics">
        <title>Evolution of mouse T-box genes by tandem duplication and cluster dispersion.</title>
        <authorList>
            <person name="Agulnik S.I."/>
            <person name="Garvey N."/>
            <person name="Hancock S."/>
            <person name="Ruvinsky I."/>
            <person name="Chapman D.L."/>
            <person name="Agulnik I."/>
            <person name="Bollag R.J."/>
            <person name="Papaioannou V.E."/>
            <person name="Silver L.M."/>
        </authorList>
    </citation>
    <scope>NUCLEOTIDE SEQUENCE [MRNA] OF 112-313 (ISOFORM 2)</scope>
    <source>
        <tissue>Embryo</tissue>
    </source>
</reference>
<reference key="4">
    <citation type="journal article" date="1994" name="Nat. Genet.">
        <title>An ancient family of embryonically expressed mouse genes sharing a conserved protein motif with the T locus.</title>
        <authorList>
            <person name="Bollag R.J."/>
            <person name="Siegfried Z."/>
            <person name="Cebra-Thomas J.A."/>
            <person name="Garvey N."/>
            <person name="Davison E.M."/>
            <person name="Silver L.M."/>
        </authorList>
    </citation>
    <scope>NUCLEOTIDE SEQUENCE [MRNA] OF 185-286 (ISOFORM 2)</scope>
    <source>
        <tissue>Embryo</tissue>
    </source>
</reference>
<reference key="5">
    <citation type="journal article" date="1996" name="Dev. Dyn.">
        <title>Expression of the T-box family genes, Tbx1-Tbx5, during early mouse development.</title>
        <authorList>
            <person name="Chapman D.L."/>
            <person name="Garvey N."/>
            <person name="Hancock S."/>
            <person name="Alexiou M."/>
            <person name="Agulnik S.I."/>
            <person name="Gibson-Brown J.J."/>
            <person name="Cebra-Thomas J."/>
            <person name="Bollag R.J."/>
            <person name="Silver L.M."/>
            <person name="Papaioannou V.E."/>
        </authorList>
    </citation>
    <scope>DEVELOPMENTAL STAGE</scope>
</reference>
<reference key="6">
    <citation type="journal article" date="2005" name="Dev. Dyn.">
        <title>Tbx3, the ulnar-mammary syndrome gene, and Tbx2 interact in mammary gland development through a p19Arf/p53-independent pathway.</title>
        <authorList>
            <person name="Jerome-Majewska L.A."/>
            <person name="Jenkins G.P."/>
            <person name="Ernstoff E."/>
            <person name="Zindy F."/>
            <person name="Sherr C.J."/>
            <person name="Papaioannou V.E."/>
        </authorList>
    </citation>
    <scope>FUNCTION</scope>
    <scope>DEVELOPMENTAL STAGE</scope>
</reference>
<reference key="7">
    <citation type="journal article" date="2016" name="Dev. Cell">
        <title>Tbx2 and Tbx3 Act Downstream of Shh to Maintain Canonical Wnt Signaling during Branching Morphogenesis of the Murine Lung.</title>
        <authorList>
            <person name="Luedtke T.H."/>
            <person name="Rudat C."/>
            <person name="Wojahn I."/>
            <person name="Weiss A.C."/>
            <person name="Kleppa M.J."/>
            <person name="Kurz J."/>
            <person name="Farin H.F."/>
            <person name="Moon A."/>
            <person name="Christoffels V.M."/>
            <person name="Kispert A."/>
        </authorList>
    </citation>
    <scope>FUNCTION</scope>
    <scope>DISRUPTION PHENOTYPE</scope>
</reference>
<reference key="8">
    <citation type="journal article" date="2021" name="Development">
        <title>Regulation of otocyst patterning by Tbx2 and Tbx3 is required for inner ear morphogenesis in the mouse.</title>
        <authorList>
            <person name="Kaiser M."/>
            <person name="Wojahn I."/>
            <person name="Rudat C."/>
            <person name="Luedtke T.H."/>
            <person name="Christoffels V.M."/>
            <person name="Moon A."/>
            <person name="Kispert A."/>
            <person name="Trowe M.O."/>
        </authorList>
    </citation>
    <scope>FUNCTION</scope>
    <scope>DEVELOPMENTAL STAGE</scope>
    <scope>DISRUPTION PHENOTYPE</scope>
</reference>
<reference key="9">
    <citation type="journal article" date="2007" name="Proc. Natl. Acad. Sci. U.S.A.">
        <title>Large-scale phosphorylation analysis of mouse liver.</title>
        <authorList>
            <person name="Villen J."/>
            <person name="Beausoleil S.A."/>
            <person name="Gerber S.A."/>
            <person name="Gygi S.P."/>
        </authorList>
    </citation>
    <scope>PHOSPHORYLATION [LARGE SCALE ANALYSIS] AT SER-705</scope>
    <scope>IDENTIFICATION BY MASS SPECTROMETRY [LARGE SCALE ANALYSIS]</scope>
    <source>
        <tissue>Liver</tissue>
    </source>
</reference>
<reference key="10">
    <citation type="journal article" date="2010" name="Cell">
        <title>A tissue-specific atlas of mouse protein phosphorylation and expression.</title>
        <authorList>
            <person name="Huttlin E.L."/>
            <person name="Jedrychowski M.P."/>
            <person name="Elias J.E."/>
            <person name="Goswami T."/>
            <person name="Rad R."/>
            <person name="Beausoleil S.A."/>
            <person name="Villen J."/>
            <person name="Haas W."/>
            <person name="Sowa M.E."/>
            <person name="Gygi S.P."/>
        </authorList>
    </citation>
    <scope>PHOSPHORYLATION [LARGE SCALE ANALYSIS] AT SER-705</scope>
    <scope>IDENTIFICATION BY MASS SPECTROMETRY [LARGE SCALE ANALYSIS]</scope>
    <source>
        <tissue>Brown adipose tissue</tissue>
        <tissue>Kidney</tissue>
        <tissue>Liver</tissue>
        <tissue>Lung</tissue>
    </source>
</reference>
<proteinExistence type="evidence at protein level"/>
<accession>P70324</accession>
<accession>E9QM97</accession>
<accession>Q60708</accession>
<accession>Q8BWH7</accession>
<name>TBX3_MOUSE</name>
<dbReference type="EMBL" id="AK052453">
    <property type="protein sequence ID" value="BAC34999.1"/>
    <property type="molecule type" value="mRNA"/>
</dbReference>
<dbReference type="EMBL" id="AC140675">
    <property type="status" value="NOT_ANNOTATED_CDS"/>
    <property type="molecule type" value="Genomic_DNA"/>
</dbReference>
<dbReference type="EMBL" id="U57328">
    <property type="protein sequence ID" value="AAC53107.1"/>
    <property type="molecule type" value="mRNA"/>
</dbReference>
<dbReference type="EMBL" id="U15567">
    <property type="protein sequence ID" value="AAC52698.1"/>
    <property type="molecule type" value="mRNA"/>
</dbReference>
<dbReference type="CCDS" id="CCDS19613.1">
    <molecule id="P70324-1"/>
</dbReference>
<dbReference type="CCDS" id="CCDS19614.1">
    <molecule id="P70324-2"/>
</dbReference>
<dbReference type="RefSeq" id="NP_035665.2">
    <molecule id="P70324-1"/>
    <property type="nucleotide sequence ID" value="NM_011535.3"/>
</dbReference>
<dbReference type="RefSeq" id="NP_932169.1">
    <molecule id="P70324-2"/>
    <property type="nucleotide sequence ID" value="NM_198052.2"/>
</dbReference>
<dbReference type="RefSeq" id="XP_006530339.1">
    <molecule id="P70324-1"/>
    <property type="nucleotide sequence ID" value="XM_006530276.5"/>
</dbReference>
<dbReference type="SMR" id="P70324"/>
<dbReference type="BioGRID" id="203988">
    <property type="interactions" value="5"/>
</dbReference>
<dbReference type="FunCoup" id="P70324">
    <property type="interactions" value="473"/>
</dbReference>
<dbReference type="IntAct" id="P70324">
    <property type="interactions" value="2"/>
</dbReference>
<dbReference type="STRING" id="10090.ENSMUSP00000018748"/>
<dbReference type="GlyGen" id="P70324">
    <property type="glycosylation" value="1 site, 1 O-linked glycan (1 site)"/>
</dbReference>
<dbReference type="iPTMnet" id="P70324"/>
<dbReference type="PhosphoSitePlus" id="P70324"/>
<dbReference type="PaxDb" id="10090-ENSMUSP00000018748"/>
<dbReference type="PeptideAtlas" id="P70324"/>
<dbReference type="ProteomicsDB" id="254671">
    <molecule id="P70324-1"/>
</dbReference>
<dbReference type="ProteomicsDB" id="254672">
    <molecule id="P70324-2"/>
</dbReference>
<dbReference type="Pumba" id="P70324"/>
<dbReference type="Antibodypedia" id="1789">
    <property type="antibodies" value="462 antibodies from 34 providers"/>
</dbReference>
<dbReference type="DNASU" id="21386"/>
<dbReference type="Ensembl" id="ENSMUST00000018748.9">
    <molecule id="P70324-1"/>
    <property type="protein sequence ID" value="ENSMUSP00000018748.9"/>
    <property type="gene ID" value="ENSMUSG00000018604.19"/>
</dbReference>
<dbReference type="Ensembl" id="ENSMUST00000079719.11">
    <molecule id="P70324-2"/>
    <property type="protein sequence ID" value="ENSMUSP00000078657.5"/>
    <property type="gene ID" value="ENSMUSG00000018604.19"/>
</dbReference>
<dbReference type="Ensembl" id="ENSMUST00000121021.8">
    <molecule id="P70324-2"/>
    <property type="protein sequence ID" value="ENSMUSP00000112519.2"/>
    <property type="gene ID" value="ENSMUSG00000018604.19"/>
</dbReference>
<dbReference type="GeneID" id="21386"/>
<dbReference type="KEGG" id="mmu:21386"/>
<dbReference type="UCSC" id="uc008zgu.2">
    <molecule id="P70324-1"/>
    <property type="organism name" value="mouse"/>
</dbReference>
<dbReference type="AGR" id="MGI:98495"/>
<dbReference type="CTD" id="6926"/>
<dbReference type="MGI" id="MGI:98495">
    <property type="gene designation" value="Tbx3"/>
</dbReference>
<dbReference type="VEuPathDB" id="HostDB:ENSMUSG00000018604"/>
<dbReference type="eggNOG" id="KOG3585">
    <property type="taxonomic scope" value="Eukaryota"/>
</dbReference>
<dbReference type="GeneTree" id="ENSGT00940000158066"/>
<dbReference type="HOGENOM" id="CLU_023038_1_0_1"/>
<dbReference type="InParanoid" id="P70324"/>
<dbReference type="OMA" id="QGIAMSP"/>
<dbReference type="OrthoDB" id="7442607at2759"/>
<dbReference type="PhylomeDB" id="P70324"/>
<dbReference type="TreeFam" id="TF106341"/>
<dbReference type="Reactome" id="R-MMU-9856649">
    <property type="pathway name" value="Transcriptional and post-translational regulation of MITF-M expression and activity"/>
</dbReference>
<dbReference type="BioGRID-ORCS" id="21386">
    <property type="hits" value="2 hits in 78 CRISPR screens"/>
</dbReference>
<dbReference type="ChiTaRS" id="Tbx3">
    <property type="organism name" value="mouse"/>
</dbReference>
<dbReference type="PRO" id="PR:P70324"/>
<dbReference type="Proteomes" id="UP000000589">
    <property type="component" value="Chromosome 5"/>
</dbReference>
<dbReference type="RNAct" id="P70324">
    <property type="molecule type" value="protein"/>
</dbReference>
<dbReference type="Bgee" id="ENSMUSG00000018604">
    <property type="expression patterns" value="Expressed in undifferentiated genital tubercle and 278 other cell types or tissues"/>
</dbReference>
<dbReference type="ExpressionAtlas" id="P70324">
    <property type="expression patterns" value="baseline and differential"/>
</dbReference>
<dbReference type="GO" id="GO:0005929">
    <property type="term" value="C:cilium"/>
    <property type="evidence" value="ECO:0000314"/>
    <property type="project" value="MGI"/>
</dbReference>
<dbReference type="GO" id="GO:0005634">
    <property type="term" value="C:nucleus"/>
    <property type="evidence" value="ECO:0000314"/>
    <property type="project" value="MGI"/>
</dbReference>
<dbReference type="GO" id="GO:0001228">
    <property type="term" value="F:DNA-binding transcription activator activity, RNA polymerase II-specific"/>
    <property type="evidence" value="ECO:0007669"/>
    <property type="project" value="Ensembl"/>
</dbReference>
<dbReference type="GO" id="GO:0003700">
    <property type="term" value="F:DNA-binding transcription factor activity"/>
    <property type="evidence" value="ECO:0000314"/>
    <property type="project" value="MGI"/>
</dbReference>
<dbReference type="GO" id="GO:0001227">
    <property type="term" value="F:DNA-binding transcription repressor activity, RNA polymerase II-specific"/>
    <property type="evidence" value="ECO:0007669"/>
    <property type="project" value="Ensembl"/>
</dbReference>
<dbReference type="GO" id="GO:0000978">
    <property type="term" value="F:RNA polymerase II cis-regulatory region sequence-specific DNA binding"/>
    <property type="evidence" value="ECO:0000314"/>
    <property type="project" value="UniProtKB"/>
</dbReference>
<dbReference type="GO" id="GO:0061629">
    <property type="term" value="F:RNA polymerase II-specific DNA-binding transcription factor binding"/>
    <property type="evidence" value="ECO:0000353"/>
    <property type="project" value="BHF-UCL"/>
</dbReference>
<dbReference type="GO" id="GO:0043565">
    <property type="term" value="F:sequence-specific DNA binding"/>
    <property type="evidence" value="ECO:0000250"/>
    <property type="project" value="UniProtKB"/>
</dbReference>
<dbReference type="GO" id="GO:0009887">
    <property type="term" value="P:animal organ morphogenesis"/>
    <property type="evidence" value="ECO:0000266"/>
    <property type="project" value="MGI"/>
</dbReference>
<dbReference type="GO" id="GO:0008595">
    <property type="term" value="P:anterior/posterior axis specification, embryo"/>
    <property type="evidence" value="ECO:0000250"/>
    <property type="project" value="UniProtKB"/>
</dbReference>
<dbReference type="GO" id="GO:0003167">
    <property type="term" value="P:atrioventricular bundle cell differentiation"/>
    <property type="evidence" value="ECO:0000315"/>
    <property type="project" value="MGI"/>
</dbReference>
<dbReference type="GO" id="GO:0036302">
    <property type="term" value="P:atrioventricular canal development"/>
    <property type="evidence" value="ECO:0000316"/>
    <property type="project" value="BHF-UCL"/>
</dbReference>
<dbReference type="GO" id="GO:1905222">
    <property type="term" value="P:atrioventricular canal morphogenesis"/>
    <property type="evidence" value="ECO:0000316"/>
    <property type="project" value="BHF-UCL"/>
</dbReference>
<dbReference type="GO" id="GO:0001568">
    <property type="term" value="P:blood vessel development"/>
    <property type="evidence" value="ECO:0000315"/>
    <property type="project" value="MGI"/>
</dbReference>
<dbReference type="GO" id="GO:0060444">
    <property type="term" value="P:branching involved in mammary gland duct morphogenesis"/>
    <property type="evidence" value="ECO:0000315"/>
    <property type="project" value="MGI"/>
</dbReference>
<dbReference type="GO" id="GO:0060317">
    <property type="term" value="P:cardiac epithelial to mesenchymal transition"/>
    <property type="evidence" value="ECO:0007669"/>
    <property type="project" value="Ensembl"/>
</dbReference>
<dbReference type="GO" id="GO:1905072">
    <property type="term" value="P:cardiac jelly development"/>
    <property type="evidence" value="ECO:0007669"/>
    <property type="project" value="Ensembl"/>
</dbReference>
<dbReference type="GO" id="GO:0055007">
    <property type="term" value="P:cardiac muscle cell differentiation"/>
    <property type="evidence" value="ECO:0000315"/>
    <property type="project" value="MGI"/>
</dbReference>
<dbReference type="GO" id="GO:0060923">
    <property type="term" value="P:cardiac muscle cell fate commitment"/>
    <property type="evidence" value="ECO:0000315"/>
    <property type="project" value="MGI"/>
</dbReference>
<dbReference type="GO" id="GO:0090398">
    <property type="term" value="P:cellular senescence"/>
    <property type="evidence" value="ECO:0000314"/>
    <property type="project" value="MGI"/>
</dbReference>
<dbReference type="GO" id="GO:0006351">
    <property type="term" value="P:DNA-templated transcription"/>
    <property type="evidence" value="ECO:0000315"/>
    <property type="project" value="MGI"/>
</dbReference>
<dbReference type="GO" id="GO:0042733">
    <property type="term" value="P:embryonic digit morphogenesis"/>
    <property type="evidence" value="ECO:0000315"/>
    <property type="project" value="MGI"/>
</dbReference>
<dbReference type="GO" id="GO:0035115">
    <property type="term" value="P:embryonic forelimb morphogenesis"/>
    <property type="evidence" value="ECO:0000250"/>
    <property type="project" value="UniProtKB"/>
</dbReference>
<dbReference type="GO" id="GO:0035050">
    <property type="term" value="P:embryonic heart tube development"/>
    <property type="evidence" value="ECO:0000315"/>
    <property type="project" value="MGI"/>
</dbReference>
<dbReference type="GO" id="GO:0035116">
    <property type="term" value="P:embryonic hindlimb morphogenesis"/>
    <property type="evidence" value="ECO:0000315"/>
    <property type="project" value="MGI"/>
</dbReference>
<dbReference type="GO" id="GO:0003272">
    <property type="term" value="P:endocardial cushion formation"/>
    <property type="evidence" value="ECO:0007669"/>
    <property type="project" value="Ensembl"/>
</dbReference>
<dbReference type="GO" id="GO:0030540">
    <property type="term" value="P:female genitalia development"/>
    <property type="evidence" value="ECO:0000250"/>
    <property type="project" value="UniProtKB"/>
</dbReference>
<dbReference type="GO" id="GO:0046884">
    <property type="term" value="P:follicle-stimulating hormone secretion"/>
    <property type="evidence" value="ECO:0000250"/>
    <property type="project" value="UniProtKB"/>
</dbReference>
<dbReference type="GO" id="GO:0035136">
    <property type="term" value="P:forelimb morphogenesis"/>
    <property type="evidence" value="ECO:0000266"/>
    <property type="project" value="MGI"/>
</dbReference>
<dbReference type="GO" id="GO:0001947">
    <property type="term" value="P:heart looping"/>
    <property type="evidence" value="ECO:0000315"/>
    <property type="project" value="MGI"/>
</dbReference>
<dbReference type="GO" id="GO:0003007">
    <property type="term" value="P:heart morphogenesis"/>
    <property type="evidence" value="ECO:0000315"/>
    <property type="project" value="MGI"/>
</dbReference>
<dbReference type="GO" id="GO:0061017">
    <property type="term" value="P:hepatoblast differentiation"/>
    <property type="evidence" value="ECO:0000315"/>
    <property type="project" value="MGI"/>
</dbReference>
<dbReference type="GO" id="GO:0001701">
    <property type="term" value="P:in utero embryonic development"/>
    <property type="evidence" value="ECO:0000315"/>
    <property type="project" value="MGI"/>
</dbReference>
<dbReference type="GO" id="GO:0042472">
    <property type="term" value="P:inner ear morphogenesis"/>
    <property type="evidence" value="ECO:0000316"/>
    <property type="project" value="UniProtKB"/>
</dbReference>
<dbReference type="GO" id="GO:0035108">
    <property type="term" value="P:limb morphogenesis"/>
    <property type="evidence" value="ECO:0000315"/>
    <property type="project" value="MGI"/>
</dbReference>
<dbReference type="GO" id="GO:0021761">
    <property type="term" value="P:limbic system development"/>
    <property type="evidence" value="ECO:0000315"/>
    <property type="project" value="MGI"/>
</dbReference>
<dbReference type="GO" id="GO:0032275">
    <property type="term" value="P:luteinizing hormone secretion"/>
    <property type="evidence" value="ECO:0000250"/>
    <property type="project" value="UniProtKB"/>
</dbReference>
<dbReference type="GO" id="GO:0030539">
    <property type="term" value="P:male genitalia development"/>
    <property type="evidence" value="ECO:0000250"/>
    <property type="project" value="UniProtKB"/>
</dbReference>
<dbReference type="GO" id="GO:0030879">
    <property type="term" value="P:mammary gland development"/>
    <property type="evidence" value="ECO:0000315"/>
    <property type="project" value="MGI"/>
</dbReference>
<dbReference type="GO" id="GO:0060596">
    <property type="term" value="P:mammary placode formation"/>
    <property type="evidence" value="ECO:0000314"/>
    <property type="project" value="MGI"/>
</dbReference>
<dbReference type="GO" id="GO:0048332">
    <property type="term" value="P:mesoderm morphogenesis"/>
    <property type="evidence" value="ECO:0000250"/>
    <property type="project" value="UniProtKB"/>
</dbReference>
<dbReference type="GO" id="GO:0043066">
    <property type="term" value="P:negative regulation of apoptotic process"/>
    <property type="evidence" value="ECO:0000250"/>
    <property type="project" value="UniProtKB"/>
</dbReference>
<dbReference type="GO" id="GO:2000137">
    <property type="term" value="P:negative regulation of cell proliferation involved in heart morphogenesis"/>
    <property type="evidence" value="ECO:0007669"/>
    <property type="project" value="Ensembl"/>
</dbReference>
<dbReference type="GO" id="GO:0045892">
    <property type="term" value="P:negative regulation of DNA-templated transcription"/>
    <property type="evidence" value="ECO:0000314"/>
    <property type="project" value="MGI"/>
</dbReference>
<dbReference type="GO" id="GO:0030857">
    <property type="term" value="P:negative regulation of epithelial cell differentiation"/>
    <property type="evidence" value="ECO:0000315"/>
    <property type="project" value="MGI"/>
</dbReference>
<dbReference type="GO" id="GO:0045662">
    <property type="term" value="P:negative regulation of myoblast differentiation"/>
    <property type="evidence" value="ECO:0000250"/>
    <property type="project" value="UniProtKB"/>
</dbReference>
<dbReference type="GO" id="GO:2000737">
    <property type="term" value="P:negative regulation of stem cell differentiation"/>
    <property type="evidence" value="ECO:0000315"/>
    <property type="project" value="MGI"/>
</dbReference>
<dbReference type="GO" id="GO:0000122">
    <property type="term" value="P:negative regulation of transcription by RNA polymerase II"/>
    <property type="evidence" value="ECO:0000315"/>
    <property type="project" value="UniProtKB"/>
</dbReference>
<dbReference type="GO" id="GO:0003151">
    <property type="term" value="P:outflow tract morphogenesis"/>
    <property type="evidence" value="ECO:0000315"/>
    <property type="project" value="MGI"/>
</dbReference>
<dbReference type="GO" id="GO:0045787">
    <property type="term" value="P:positive regulation of cell cycle"/>
    <property type="evidence" value="ECO:0000250"/>
    <property type="project" value="UniProtKB"/>
</dbReference>
<dbReference type="GO" id="GO:0045893">
    <property type="term" value="P:positive regulation of DNA-templated transcription"/>
    <property type="evidence" value="ECO:0000315"/>
    <property type="project" value="MGI"/>
</dbReference>
<dbReference type="GO" id="GO:2000648">
    <property type="term" value="P:positive regulation of stem cell proliferation"/>
    <property type="evidence" value="ECO:0000315"/>
    <property type="project" value="MGI"/>
</dbReference>
<dbReference type="GO" id="GO:0042127">
    <property type="term" value="P:regulation of cell population proliferation"/>
    <property type="evidence" value="ECO:0000315"/>
    <property type="project" value="MGI"/>
</dbReference>
<dbReference type="GO" id="GO:0061635">
    <property type="term" value="P:regulation of protein complex stability"/>
    <property type="evidence" value="ECO:0000315"/>
    <property type="project" value="MGI"/>
</dbReference>
<dbReference type="GO" id="GO:0031647">
    <property type="term" value="P:regulation of protein stability"/>
    <property type="evidence" value="ECO:0000315"/>
    <property type="project" value="MGI"/>
</dbReference>
<dbReference type="GO" id="GO:0060021">
    <property type="term" value="P:roof of mouth development"/>
    <property type="evidence" value="ECO:0000316"/>
    <property type="project" value="MGI"/>
</dbReference>
<dbReference type="GO" id="GO:0048752">
    <property type="term" value="P:semicircular canal morphogenesis"/>
    <property type="evidence" value="ECO:0000315"/>
    <property type="project" value="UniProtKB"/>
</dbReference>
<dbReference type="GO" id="GO:0060931">
    <property type="term" value="P:sinoatrial node cell development"/>
    <property type="evidence" value="ECO:0000315"/>
    <property type="project" value="MGI"/>
</dbReference>
<dbReference type="GO" id="GO:0001501">
    <property type="term" value="P:skeletal system development"/>
    <property type="evidence" value="ECO:0000250"/>
    <property type="project" value="UniProtKB"/>
</dbReference>
<dbReference type="GO" id="GO:0051145">
    <property type="term" value="P:smooth muscle cell differentiation"/>
    <property type="evidence" value="ECO:0000316"/>
    <property type="project" value="MGI"/>
</dbReference>
<dbReference type="GO" id="GO:0010159">
    <property type="term" value="P:specification of animal organ position"/>
    <property type="evidence" value="ECO:0000314"/>
    <property type="project" value="MGI"/>
</dbReference>
<dbReference type="GO" id="GO:0019827">
    <property type="term" value="P:stem cell population maintenance"/>
    <property type="evidence" value="ECO:0000315"/>
    <property type="project" value="MGI"/>
</dbReference>
<dbReference type="GO" id="GO:0072089">
    <property type="term" value="P:stem cell proliferation"/>
    <property type="evidence" value="ECO:0000315"/>
    <property type="project" value="MGI"/>
</dbReference>
<dbReference type="GO" id="GO:0072105">
    <property type="term" value="P:ureteric peristalsis"/>
    <property type="evidence" value="ECO:0000316"/>
    <property type="project" value="MGI"/>
</dbReference>
<dbReference type="GO" id="GO:0060412">
    <property type="term" value="P:ventricular septum morphogenesis"/>
    <property type="evidence" value="ECO:0000315"/>
    <property type="project" value="MGI"/>
</dbReference>
<dbReference type="CDD" id="cd20188">
    <property type="entry name" value="T-box_TBX2_3-like"/>
    <property type="match status" value="1"/>
</dbReference>
<dbReference type="FunFam" id="2.60.40.820:FF:000003">
    <property type="entry name" value="T-box transcription factor TBX3"/>
    <property type="match status" value="1"/>
</dbReference>
<dbReference type="Gene3D" id="2.60.40.820">
    <property type="entry name" value="Transcription factor, T-box"/>
    <property type="match status" value="1"/>
</dbReference>
<dbReference type="InterPro" id="IPR008967">
    <property type="entry name" value="p53-like_TF_DNA-bd_sf"/>
</dbReference>
<dbReference type="InterPro" id="IPR046360">
    <property type="entry name" value="T-box_DNA-bd"/>
</dbReference>
<dbReference type="InterPro" id="IPR036960">
    <property type="entry name" value="T-box_sf"/>
</dbReference>
<dbReference type="InterPro" id="IPR022582">
    <property type="entry name" value="TBX2/3_TAD"/>
</dbReference>
<dbReference type="InterPro" id="IPR048387">
    <property type="entry name" value="TBX2_3_RD"/>
</dbReference>
<dbReference type="InterPro" id="IPR001699">
    <property type="entry name" value="TF_T-box"/>
</dbReference>
<dbReference type="InterPro" id="IPR018186">
    <property type="entry name" value="TF_T-box_CS"/>
</dbReference>
<dbReference type="PANTHER" id="PTHR11267">
    <property type="entry name" value="T-BOX PROTEIN-RELATED"/>
    <property type="match status" value="1"/>
</dbReference>
<dbReference type="PANTHER" id="PTHR11267:SF91">
    <property type="entry name" value="T-BOX TRANSCRIPTION FACTOR TBX3"/>
    <property type="match status" value="1"/>
</dbReference>
<dbReference type="Pfam" id="PF00907">
    <property type="entry name" value="T-box"/>
    <property type="match status" value="1"/>
</dbReference>
<dbReference type="Pfam" id="PF20627">
    <property type="entry name" value="TBX2-3_RD"/>
    <property type="match status" value="1"/>
</dbReference>
<dbReference type="Pfam" id="PF12598">
    <property type="entry name" value="TBX2-3_TAD"/>
    <property type="match status" value="1"/>
</dbReference>
<dbReference type="PRINTS" id="PR00937">
    <property type="entry name" value="TBOX"/>
</dbReference>
<dbReference type="SMART" id="SM00425">
    <property type="entry name" value="TBOX"/>
    <property type="match status" value="1"/>
</dbReference>
<dbReference type="SUPFAM" id="SSF49417">
    <property type="entry name" value="p53-like transcription factors"/>
    <property type="match status" value="1"/>
</dbReference>
<dbReference type="PROSITE" id="PS01283">
    <property type="entry name" value="TBOX_1"/>
    <property type="match status" value="1"/>
</dbReference>
<dbReference type="PROSITE" id="PS01264">
    <property type="entry name" value="TBOX_2"/>
    <property type="match status" value="1"/>
</dbReference>
<dbReference type="PROSITE" id="PS50252">
    <property type="entry name" value="TBOX_3"/>
    <property type="match status" value="1"/>
</dbReference>
<feature type="chain" id="PRO_0000184429" description="T-box transcription factor TBX3">
    <location>
        <begin position="1"/>
        <end position="741"/>
    </location>
</feature>
<feature type="DNA-binding region" description="T-box; first part" evidence="3">
    <location>
        <begin position="107"/>
        <end position="220"/>
    </location>
</feature>
<feature type="DNA-binding region" description="T-box; second part" evidence="3">
    <location>
        <begin position="241"/>
        <end position="305"/>
    </location>
</feature>
<feature type="region of interest" description="Disordered" evidence="4">
    <location>
        <begin position="369"/>
        <end position="469"/>
    </location>
</feature>
<feature type="compositionally biased region" description="Basic and acidic residues" evidence="4">
    <location>
        <begin position="377"/>
        <end position="386"/>
    </location>
</feature>
<feature type="compositionally biased region" description="Basic and acidic residues" evidence="4">
    <location>
        <begin position="420"/>
        <end position="437"/>
    </location>
</feature>
<feature type="compositionally biased region" description="Polar residues" evidence="4">
    <location>
        <begin position="438"/>
        <end position="447"/>
    </location>
</feature>
<feature type="modified residue" description="Phosphoserine" evidence="2">
    <location>
        <position position="369"/>
    </location>
</feature>
<feature type="modified residue" description="Phosphoserine" evidence="2">
    <location>
        <position position="432"/>
    </location>
</feature>
<feature type="modified residue" description="Phosphoserine" evidence="2">
    <location>
        <position position="438"/>
    </location>
</feature>
<feature type="modified residue" description="Phosphoserine" evidence="2">
    <location>
        <position position="456"/>
    </location>
</feature>
<feature type="modified residue" description="Phosphoserine" evidence="12 13">
    <location>
        <position position="705"/>
    </location>
</feature>
<feature type="modified residue" description="Phosphoserine" evidence="2">
    <location>
        <position position="736"/>
    </location>
</feature>
<feature type="modified residue" description="Phosphoserine" evidence="2">
    <location>
        <position position="738"/>
    </location>
</feature>
<feature type="modified residue" description="Phosphoserine" evidence="2">
    <location>
        <position position="740"/>
    </location>
</feature>
<feature type="splice variant" id="VSP_013377" description="In isoform 2." evidence="9 10">
    <location>
        <begin position="221"/>
        <end position="240"/>
    </location>
</feature>
<feature type="sequence conflict" description="In Ref. 3; AAC53107." evidence="11" ref="3">
    <original>DI</original>
    <variation>T</variation>
    <location>
        <begin position="154"/>
        <end position="155"/>
    </location>
</feature>
<feature type="sequence conflict" description="In Ref. 3; AAC53107." evidence="11" ref="3">
    <original>M</original>
    <variation>R</variation>
    <location>
        <position position="184"/>
    </location>
</feature>
<feature type="sequence conflict" description="In Ref. 3; AAC53107." evidence="11" ref="3">
    <original>TGNG</original>
    <variation>IGHC</variation>
    <location>
        <begin position="306"/>
        <end position="309"/>
    </location>
</feature>
<feature type="sequence conflict" description="In Ref. 1; BAC34999." evidence="11" ref="1">
    <original>S</original>
    <variation>Y</variation>
    <location>
        <position position="569"/>
    </location>
</feature>
<feature type="sequence conflict" description="In Ref. 1; BAC34999." evidence="11" ref="1">
    <original>S</original>
    <variation>N</variation>
    <location>
        <position position="717"/>
    </location>
</feature>